<keyword id="KW-0001">2Fe-2S</keyword>
<keyword id="KW-0004">4Fe-4S</keyword>
<keyword id="KW-0093">Biotin biosynthesis</keyword>
<keyword id="KW-0408">Iron</keyword>
<keyword id="KW-0411">Iron-sulfur</keyword>
<keyword id="KW-0479">Metal-binding</keyword>
<keyword id="KW-1185">Reference proteome</keyword>
<keyword id="KW-0949">S-adenosyl-L-methionine</keyword>
<keyword id="KW-0808">Transferase</keyword>
<dbReference type="EC" id="2.8.1.6" evidence="1"/>
<dbReference type="EMBL" id="CP000148">
    <property type="protein sequence ID" value="ABB31814.1"/>
    <property type="molecule type" value="Genomic_DNA"/>
</dbReference>
<dbReference type="RefSeq" id="WP_004511483.1">
    <property type="nucleotide sequence ID" value="NC_007517.1"/>
</dbReference>
<dbReference type="SMR" id="Q39VB0"/>
<dbReference type="STRING" id="269799.Gmet_1582"/>
<dbReference type="KEGG" id="gme:Gmet_1582"/>
<dbReference type="eggNOG" id="COG0502">
    <property type="taxonomic scope" value="Bacteria"/>
</dbReference>
<dbReference type="HOGENOM" id="CLU_033172_2_1_7"/>
<dbReference type="UniPathway" id="UPA00078">
    <property type="reaction ID" value="UER00162"/>
</dbReference>
<dbReference type="Proteomes" id="UP000007073">
    <property type="component" value="Chromosome"/>
</dbReference>
<dbReference type="GO" id="GO:0051537">
    <property type="term" value="F:2 iron, 2 sulfur cluster binding"/>
    <property type="evidence" value="ECO:0007669"/>
    <property type="project" value="UniProtKB-KW"/>
</dbReference>
<dbReference type="GO" id="GO:0051539">
    <property type="term" value="F:4 iron, 4 sulfur cluster binding"/>
    <property type="evidence" value="ECO:0007669"/>
    <property type="project" value="UniProtKB-KW"/>
</dbReference>
<dbReference type="GO" id="GO:0004076">
    <property type="term" value="F:biotin synthase activity"/>
    <property type="evidence" value="ECO:0007669"/>
    <property type="project" value="UniProtKB-UniRule"/>
</dbReference>
<dbReference type="GO" id="GO:0005506">
    <property type="term" value="F:iron ion binding"/>
    <property type="evidence" value="ECO:0007669"/>
    <property type="project" value="UniProtKB-UniRule"/>
</dbReference>
<dbReference type="GO" id="GO:0009102">
    <property type="term" value="P:biotin biosynthetic process"/>
    <property type="evidence" value="ECO:0007669"/>
    <property type="project" value="UniProtKB-UniRule"/>
</dbReference>
<dbReference type="CDD" id="cd01335">
    <property type="entry name" value="Radical_SAM"/>
    <property type="match status" value="1"/>
</dbReference>
<dbReference type="FunFam" id="3.20.20.70:FF:000026">
    <property type="entry name" value="Biotin synthase"/>
    <property type="match status" value="1"/>
</dbReference>
<dbReference type="Gene3D" id="3.20.20.70">
    <property type="entry name" value="Aldolase class I"/>
    <property type="match status" value="1"/>
</dbReference>
<dbReference type="HAMAP" id="MF_01694">
    <property type="entry name" value="BioB"/>
    <property type="match status" value="1"/>
</dbReference>
<dbReference type="InterPro" id="IPR013785">
    <property type="entry name" value="Aldolase_TIM"/>
</dbReference>
<dbReference type="InterPro" id="IPR010722">
    <property type="entry name" value="BATS_dom"/>
</dbReference>
<dbReference type="InterPro" id="IPR002684">
    <property type="entry name" value="Biotin_synth/BioAB"/>
</dbReference>
<dbReference type="InterPro" id="IPR024177">
    <property type="entry name" value="Biotin_synthase"/>
</dbReference>
<dbReference type="InterPro" id="IPR006638">
    <property type="entry name" value="Elp3/MiaA/NifB-like_rSAM"/>
</dbReference>
<dbReference type="InterPro" id="IPR007197">
    <property type="entry name" value="rSAM"/>
</dbReference>
<dbReference type="NCBIfam" id="TIGR00433">
    <property type="entry name" value="bioB"/>
    <property type="match status" value="1"/>
</dbReference>
<dbReference type="PANTHER" id="PTHR22976">
    <property type="entry name" value="BIOTIN SYNTHASE"/>
    <property type="match status" value="1"/>
</dbReference>
<dbReference type="PANTHER" id="PTHR22976:SF2">
    <property type="entry name" value="BIOTIN SYNTHASE, MITOCHONDRIAL"/>
    <property type="match status" value="1"/>
</dbReference>
<dbReference type="Pfam" id="PF06968">
    <property type="entry name" value="BATS"/>
    <property type="match status" value="1"/>
</dbReference>
<dbReference type="Pfam" id="PF04055">
    <property type="entry name" value="Radical_SAM"/>
    <property type="match status" value="1"/>
</dbReference>
<dbReference type="PIRSF" id="PIRSF001619">
    <property type="entry name" value="Biotin_synth"/>
    <property type="match status" value="1"/>
</dbReference>
<dbReference type="SFLD" id="SFLDG01060">
    <property type="entry name" value="BATS_domain_containing"/>
    <property type="match status" value="1"/>
</dbReference>
<dbReference type="SFLD" id="SFLDG01278">
    <property type="entry name" value="biotin_synthase_like"/>
    <property type="match status" value="1"/>
</dbReference>
<dbReference type="SMART" id="SM00876">
    <property type="entry name" value="BATS"/>
    <property type="match status" value="1"/>
</dbReference>
<dbReference type="SMART" id="SM00729">
    <property type="entry name" value="Elp3"/>
    <property type="match status" value="1"/>
</dbReference>
<dbReference type="SUPFAM" id="SSF102114">
    <property type="entry name" value="Radical SAM enzymes"/>
    <property type="match status" value="1"/>
</dbReference>
<dbReference type="PROSITE" id="PS51918">
    <property type="entry name" value="RADICAL_SAM"/>
    <property type="match status" value="1"/>
</dbReference>
<protein>
    <recommendedName>
        <fullName evidence="1">Biotin synthase</fullName>
        <ecNumber evidence="1">2.8.1.6</ecNumber>
    </recommendedName>
</protein>
<reference key="1">
    <citation type="journal article" date="2009" name="BMC Microbiol.">
        <title>The genome sequence of Geobacter metallireducens: features of metabolism, physiology and regulation common and dissimilar to Geobacter sulfurreducens.</title>
        <authorList>
            <person name="Aklujkar M."/>
            <person name="Krushkal J."/>
            <person name="DiBartolo G."/>
            <person name="Lapidus A."/>
            <person name="Land M.L."/>
            <person name="Lovley D.R."/>
        </authorList>
    </citation>
    <scope>NUCLEOTIDE SEQUENCE [LARGE SCALE GENOMIC DNA]</scope>
    <source>
        <strain>ATCC 53774 / DSM 7210 / GS-15</strain>
    </source>
</reference>
<evidence type="ECO:0000255" key="1">
    <source>
        <dbReference type="HAMAP-Rule" id="MF_01694"/>
    </source>
</evidence>
<evidence type="ECO:0000255" key="2">
    <source>
        <dbReference type="PROSITE-ProRule" id="PRU01266"/>
    </source>
</evidence>
<name>BIOB_GEOMG</name>
<comment type="function">
    <text evidence="1">Catalyzes the conversion of dethiobiotin (DTB) to biotin by the insertion of a sulfur atom into dethiobiotin via a radical-based mechanism.</text>
</comment>
<comment type="catalytic activity">
    <reaction evidence="1">
        <text>(4R,5S)-dethiobiotin + (sulfur carrier)-SH + 2 reduced [2Fe-2S]-[ferredoxin] + 2 S-adenosyl-L-methionine = (sulfur carrier)-H + biotin + 2 5'-deoxyadenosine + 2 L-methionine + 2 oxidized [2Fe-2S]-[ferredoxin]</text>
        <dbReference type="Rhea" id="RHEA:22060"/>
        <dbReference type="Rhea" id="RHEA-COMP:10000"/>
        <dbReference type="Rhea" id="RHEA-COMP:10001"/>
        <dbReference type="Rhea" id="RHEA-COMP:14737"/>
        <dbReference type="Rhea" id="RHEA-COMP:14739"/>
        <dbReference type="ChEBI" id="CHEBI:17319"/>
        <dbReference type="ChEBI" id="CHEBI:29917"/>
        <dbReference type="ChEBI" id="CHEBI:33737"/>
        <dbReference type="ChEBI" id="CHEBI:33738"/>
        <dbReference type="ChEBI" id="CHEBI:57586"/>
        <dbReference type="ChEBI" id="CHEBI:57844"/>
        <dbReference type="ChEBI" id="CHEBI:59789"/>
        <dbReference type="ChEBI" id="CHEBI:64428"/>
        <dbReference type="ChEBI" id="CHEBI:149473"/>
        <dbReference type="EC" id="2.8.1.6"/>
    </reaction>
</comment>
<comment type="cofactor">
    <cofactor evidence="1">
        <name>[4Fe-4S] cluster</name>
        <dbReference type="ChEBI" id="CHEBI:49883"/>
    </cofactor>
    <text evidence="1">Binds 1 [4Fe-4S] cluster. The cluster is coordinated with 3 cysteines and an exchangeable S-adenosyl-L-methionine.</text>
</comment>
<comment type="cofactor">
    <cofactor evidence="1">
        <name>[2Fe-2S] cluster</name>
        <dbReference type="ChEBI" id="CHEBI:190135"/>
    </cofactor>
    <text evidence="1">Binds 1 [2Fe-2S] cluster. The cluster is coordinated with 3 cysteines and 1 arginine.</text>
</comment>
<comment type="pathway">
    <text evidence="1">Cofactor biosynthesis; biotin biosynthesis; biotin from 7,8-diaminononanoate: step 2/2.</text>
</comment>
<comment type="subunit">
    <text evidence="1">Homodimer.</text>
</comment>
<comment type="similarity">
    <text evidence="1">Belongs to the radical SAM superfamily. Biotin synthase family.</text>
</comment>
<accession>Q39VB0</accession>
<gene>
    <name evidence="1" type="primary">bioB</name>
    <name type="ordered locus">Gmet_1582</name>
</gene>
<proteinExistence type="inferred from homology"/>
<sequence length="329" mass="35556">MNKSLETLAGRIIAGEQLSVEESIALSASSGTDAFALFLAASRVKEHFLGNGVDLCSIINAKSGRCPENCAFCAQSAHHTTNAPIYPLVDEDKLVACAKEAEAAGSRCYGIITSGTTIKKGEELDRICRAVRRIRETTSIAPSCSLGIIDHETAVTLREAGVETYHHNLETSRSFFPHICTTHDYEEDVETVRVAKQAGLTICCGGIFGLGETAAQRVELAMTLRELDVDSVPLNFLNPIEGTRLAGSKLISPLECLKTIALFRLILPTKKIAVCGGREQNLRDLQSWIFFAGASGTMIGNYLTTTGRPAEQDWQMLRDLELAVGGCCE</sequence>
<organism>
    <name type="scientific">Geobacter metallireducens (strain ATCC 53774 / DSM 7210 / GS-15)</name>
    <dbReference type="NCBI Taxonomy" id="269799"/>
    <lineage>
        <taxon>Bacteria</taxon>
        <taxon>Pseudomonadati</taxon>
        <taxon>Thermodesulfobacteriota</taxon>
        <taxon>Desulfuromonadia</taxon>
        <taxon>Geobacterales</taxon>
        <taxon>Geobacteraceae</taxon>
        <taxon>Geobacter</taxon>
    </lineage>
</organism>
<feature type="chain" id="PRO_0000381403" description="Biotin synthase">
    <location>
        <begin position="1"/>
        <end position="329"/>
    </location>
</feature>
<feature type="domain" description="Radical SAM core" evidence="2">
    <location>
        <begin position="48"/>
        <end position="278"/>
    </location>
</feature>
<feature type="binding site" evidence="1">
    <location>
        <position position="66"/>
    </location>
    <ligand>
        <name>[4Fe-4S] cluster</name>
        <dbReference type="ChEBI" id="CHEBI:49883"/>
        <note>4Fe-4S-S-AdoMet</note>
    </ligand>
</feature>
<feature type="binding site" evidence="1">
    <location>
        <position position="70"/>
    </location>
    <ligand>
        <name>[4Fe-4S] cluster</name>
        <dbReference type="ChEBI" id="CHEBI:49883"/>
        <note>4Fe-4S-S-AdoMet</note>
    </ligand>
</feature>
<feature type="binding site" evidence="1">
    <location>
        <position position="73"/>
    </location>
    <ligand>
        <name>[4Fe-4S] cluster</name>
        <dbReference type="ChEBI" id="CHEBI:49883"/>
        <note>4Fe-4S-S-AdoMet</note>
    </ligand>
</feature>
<feature type="binding site" evidence="1">
    <location>
        <position position="143"/>
    </location>
    <ligand>
        <name>[2Fe-2S] cluster</name>
        <dbReference type="ChEBI" id="CHEBI:190135"/>
    </ligand>
</feature>
<feature type="binding site" evidence="1">
    <location>
        <position position="203"/>
    </location>
    <ligand>
        <name>[2Fe-2S] cluster</name>
        <dbReference type="ChEBI" id="CHEBI:190135"/>
    </ligand>
</feature>